<proteinExistence type="inferred from homology"/>
<organism>
    <name type="scientific">Methanococcus aeolicus (strain ATCC BAA-1280 / DSM 17508 / OCM 812 / Nankai-3)</name>
    <dbReference type="NCBI Taxonomy" id="419665"/>
    <lineage>
        <taxon>Archaea</taxon>
        <taxon>Methanobacteriati</taxon>
        <taxon>Methanobacteriota</taxon>
        <taxon>Methanomada group</taxon>
        <taxon>Methanococci</taxon>
        <taxon>Methanococcales</taxon>
        <taxon>Methanococcaceae</taxon>
        <taxon>Methanococcus</taxon>
    </lineage>
</organism>
<accession>A6UVC4</accession>
<evidence type="ECO:0000255" key="1">
    <source>
        <dbReference type="HAMAP-Rule" id="MF_00407"/>
    </source>
</evidence>
<protein>
    <recommendedName>
        <fullName evidence="1">DNA ligase</fullName>
        <ecNumber evidence="1">6.5.1.1</ecNumber>
    </recommendedName>
    <alternativeName>
        <fullName evidence="1">Polydeoxyribonucleotide synthase [ATP]</fullName>
    </alternativeName>
</protein>
<name>DNLI_META3</name>
<sequence length="562" mass="64754">MAILFKEVCDIFYKIESTTKRLEKMEYFIELIKMVENKKAPQDLKKICQIAVGRVFAEHENKELGIGPNILIDAIISTGINKKTIQNTINQTGDIGTALEQLGHNIKQTSLFQTPPTLEEVYTTLKKLSTIEGGQSQKKKIRHISSILIKSSPIEQRYLARLILEDMRIGMSIPTILGAFSKYYNQPKENLEKIYAVVNDIGLLAEKLAQRCDIYNDEELQLKIFRPIKPMLAQLIGSINDAIIEMGAPQFETKYDGARVQIHKKDNIVKIYSRKLEDITNSIPEIVEEVKNIEAQNLIIEGECVAMDKNGRPRPFQDILRRFRRKYNIDSIQSEINLKVYVFDILYYNNKSLIELPLIERRSILEKILTNKHNKLNISHKLTTDNEQKAREFYEWSLSIGHEGVMIKNPNAIYTPGSRVRTMYKFKPTLESLDVVITKAKMGMGKRKEWYGSFEIAVKDYENNLYTIGHVGSGLTEEELHNLTEQIKNITIEVINDEAIVEPKIVLEISYEEIQESDKYKCGYALRFPRVARIRTDKSIEDINSIEDIERIFDIQKGKGNL</sequence>
<dbReference type="EC" id="6.5.1.1" evidence="1"/>
<dbReference type="EMBL" id="CP000743">
    <property type="protein sequence ID" value="ABR56446.1"/>
    <property type="molecule type" value="Genomic_DNA"/>
</dbReference>
<dbReference type="SMR" id="A6UVC4"/>
<dbReference type="STRING" id="419665.Maeo_0864"/>
<dbReference type="KEGG" id="mae:Maeo_0864"/>
<dbReference type="eggNOG" id="arCOG01347">
    <property type="taxonomic scope" value="Archaea"/>
</dbReference>
<dbReference type="HOGENOM" id="CLU_005138_6_0_2"/>
<dbReference type="Proteomes" id="UP000001106">
    <property type="component" value="Chromosome"/>
</dbReference>
<dbReference type="GO" id="GO:0005524">
    <property type="term" value="F:ATP binding"/>
    <property type="evidence" value="ECO:0007669"/>
    <property type="project" value="UniProtKB-UniRule"/>
</dbReference>
<dbReference type="GO" id="GO:0003677">
    <property type="term" value="F:DNA binding"/>
    <property type="evidence" value="ECO:0007669"/>
    <property type="project" value="InterPro"/>
</dbReference>
<dbReference type="GO" id="GO:0003910">
    <property type="term" value="F:DNA ligase (ATP) activity"/>
    <property type="evidence" value="ECO:0007669"/>
    <property type="project" value="UniProtKB-UniRule"/>
</dbReference>
<dbReference type="GO" id="GO:0046872">
    <property type="term" value="F:metal ion binding"/>
    <property type="evidence" value="ECO:0007669"/>
    <property type="project" value="UniProtKB-KW"/>
</dbReference>
<dbReference type="GO" id="GO:0051301">
    <property type="term" value="P:cell division"/>
    <property type="evidence" value="ECO:0007669"/>
    <property type="project" value="UniProtKB-KW"/>
</dbReference>
<dbReference type="GO" id="GO:0071897">
    <property type="term" value="P:DNA biosynthetic process"/>
    <property type="evidence" value="ECO:0007669"/>
    <property type="project" value="InterPro"/>
</dbReference>
<dbReference type="GO" id="GO:0006310">
    <property type="term" value="P:DNA recombination"/>
    <property type="evidence" value="ECO:0007669"/>
    <property type="project" value="UniProtKB-UniRule"/>
</dbReference>
<dbReference type="GO" id="GO:0006281">
    <property type="term" value="P:DNA repair"/>
    <property type="evidence" value="ECO:0007669"/>
    <property type="project" value="UniProtKB-UniRule"/>
</dbReference>
<dbReference type="GO" id="GO:0006273">
    <property type="term" value="P:lagging strand elongation"/>
    <property type="evidence" value="ECO:0007669"/>
    <property type="project" value="TreeGrafter"/>
</dbReference>
<dbReference type="CDD" id="cd07901">
    <property type="entry name" value="Adenylation_DNA_ligase_Arch_LigB"/>
    <property type="match status" value="1"/>
</dbReference>
<dbReference type="FunFam" id="3.30.470.30:FF:000012">
    <property type="entry name" value="Probable DNA ligase"/>
    <property type="match status" value="1"/>
</dbReference>
<dbReference type="Gene3D" id="1.10.3260.10">
    <property type="entry name" value="DNA ligase, ATP-dependent, N-terminal domain"/>
    <property type="match status" value="1"/>
</dbReference>
<dbReference type="Gene3D" id="3.30.470.30">
    <property type="entry name" value="DNA ligase/mRNA capping enzyme"/>
    <property type="match status" value="1"/>
</dbReference>
<dbReference type="Gene3D" id="2.40.50.140">
    <property type="entry name" value="Nucleic acid-binding proteins"/>
    <property type="match status" value="1"/>
</dbReference>
<dbReference type="HAMAP" id="MF_00407">
    <property type="entry name" value="DNA_ligase"/>
    <property type="match status" value="1"/>
</dbReference>
<dbReference type="InterPro" id="IPR050191">
    <property type="entry name" value="ATP-dep_DNA_ligase"/>
</dbReference>
<dbReference type="InterPro" id="IPR022865">
    <property type="entry name" value="DNA_ligae_ATP-dep_bac/arc"/>
</dbReference>
<dbReference type="InterPro" id="IPR000977">
    <property type="entry name" value="DNA_ligase_ATP-dep"/>
</dbReference>
<dbReference type="InterPro" id="IPR012309">
    <property type="entry name" value="DNA_ligase_ATP-dep_C"/>
</dbReference>
<dbReference type="InterPro" id="IPR012310">
    <property type="entry name" value="DNA_ligase_ATP-dep_cent"/>
</dbReference>
<dbReference type="InterPro" id="IPR016059">
    <property type="entry name" value="DNA_ligase_ATP-dep_CS"/>
</dbReference>
<dbReference type="InterPro" id="IPR012308">
    <property type="entry name" value="DNA_ligase_ATP-dep_N"/>
</dbReference>
<dbReference type="InterPro" id="IPR036599">
    <property type="entry name" value="DNA_ligase_N_sf"/>
</dbReference>
<dbReference type="InterPro" id="IPR012340">
    <property type="entry name" value="NA-bd_OB-fold"/>
</dbReference>
<dbReference type="NCBIfam" id="TIGR00574">
    <property type="entry name" value="dnl1"/>
    <property type="match status" value="1"/>
</dbReference>
<dbReference type="PANTHER" id="PTHR45674:SF7">
    <property type="entry name" value="DNA LIGASE"/>
    <property type="match status" value="1"/>
</dbReference>
<dbReference type="PANTHER" id="PTHR45674">
    <property type="entry name" value="DNA LIGASE 1/3 FAMILY MEMBER"/>
    <property type="match status" value="1"/>
</dbReference>
<dbReference type="Pfam" id="PF04679">
    <property type="entry name" value="DNA_ligase_A_C"/>
    <property type="match status" value="1"/>
</dbReference>
<dbReference type="Pfam" id="PF01068">
    <property type="entry name" value="DNA_ligase_A_M"/>
    <property type="match status" value="1"/>
</dbReference>
<dbReference type="Pfam" id="PF04675">
    <property type="entry name" value="DNA_ligase_A_N"/>
    <property type="match status" value="1"/>
</dbReference>
<dbReference type="SUPFAM" id="SSF117018">
    <property type="entry name" value="ATP-dependent DNA ligase DNA-binding domain"/>
    <property type="match status" value="1"/>
</dbReference>
<dbReference type="SUPFAM" id="SSF56091">
    <property type="entry name" value="DNA ligase/mRNA capping enzyme, catalytic domain"/>
    <property type="match status" value="1"/>
</dbReference>
<dbReference type="SUPFAM" id="SSF50249">
    <property type="entry name" value="Nucleic acid-binding proteins"/>
    <property type="match status" value="1"/>
</dbReference>
<dbReference type="PROSITE" id="PS00697">
    <property type="entry name" value="DNA_LIGASE_A1"/>
    <property type="match status" value="1"/>
</dbReference>
<dbReference type="PROSITE" id="PS00333">
    <property type="entry name" value="DNA_LIGASE_A2"/>
    <property type="match status" value="1"/>
</dbReference>
<dbReference type="PROSITE" id="PS50160">
    <property type="entry name" value="DNA_LIGASE_A3"/>
    <property type="match status" value="1"/>
</dbReference>
<reference key="1">
    <citation type="submission" date="2007-06" db="EMBL/GenBank/DDBJ databases">
        <title>Complete sequence of Methanococcus aeolicus Nankai-3.</title>
        <authorList>
            <consortium name="US DOE Joint Genome Institute"/>
            <person name="Copeland A."/>
            <person name="Lucas S."/>
            <person name="Lapidus A."/>
            <person name="Barry K."/>
            <person name="Glavina del Rio T."/>
            <person name="Dalin E."/>
            <person name="Tice H."/>
            <person name="Pitluck S."/>
            <person name="Chain P."/>
            <person name="Malfatti S."/>
            <person name="Shin M."/>
            <person name="Vergez L."/>
            <person name="Schmutz J."/>
            <person name="Larimer F."/>
            <person name="Land M."/>
            <person name="Hauser L."/>
            <person name="Kyrpides N."/>
            <person name="Lykidis A."/>
            <person name="Sieprawska-Lupa M."/>
            <person name="Whitman W.B."/>
            <person name="Richardson P."/>
        </authorList>
    </citation>
    <scope>NUCLEOTIDE SEQUENCE [LARGE SCALE GENOMIC DNA]</scope>
    <source>
        <strain>ATCC BAA-1280 / DSM 17508 / OCM 812 / Nankai-3</strain>
    </source>
</reference>
<keyword id="KW-0067">ATP-binding</keyword>
<keyword id="KW-0131">Cell cycle</keyword>
<keyword id="KW-0132">Cell division</keyword>
<keyword id="KW-0227">DNA damage</keyword>
<keyword id="KW-0233">DNA recombination</keyword>
<keyword id="KW-0234">DNA repair</keyword>
<keyword id="KW-0235">DNA replication</keyword>
<keyword id="KW-0436">Ligase</keyword>
<keyword id="KW-0460">Magnesium</keyword>
<keyword id="KW-0479">Metal-binding</keyword>
<keyword id="KW-0547">Nucleotide-binding</keyword>
<feature type="chain" id="PRO_0000365251" description="DNA ligase">
    <location>
        <begin position="1"/>
        <end position="562"/>
    </location>
</feature>
<feature type="active site" description="N6-AMP-lysine intermediate" evidence="1">
    <location>
        <position position="254"/>
    </location>
</feature>
<feature type="binding site" evidence="1">
    <location>
        <position position="252"/>
    </location>
    <ligand>
        <name>ATP</name>
        <dbReference type="ChEBI" id="CHEBI:30616"/>
    </ligand>
</feature>
<feature type="binding site" evidence="1">
    <location>
        <position position="259"/>
    </location>
    <ligand>
        <name>ATP</name>
        <dbReference type="ChEBI" id="CHEBI:30616"/>
    </ligand>
</feature>
<feature type="binding site" evidence="1">
    <location>
        <position position="274"/>
    </location>
    <ligand>
        <name>ATP</name>
        <dbReference type="ChEBI" id="CHEBI:30616"/>
    </ligand>
</feature>
<feature type="binding site" evidence="1">
    <location>
        <position position="303"/>
    </location>
    <ligand>
        <name>ATP</name>
        <dbReference type="ChEBI" id="CHEBI:30616"/>
    </ligand>
</feature>
<feature type="binding site" evidence="1">
    <location>
        <position position="343"/>
    </location>
    <ligand>
        <name>ATP</name>
        <dbReference type="ChEBI" id="CHEBI:30616"/>
    </ligand>
</feature>
<feature type="binding site" evidence="1">
    <location>
        <position position="419"/>
    </location>
    <ligand>
        <name>ATP</name>
        <dbReference type="ChEBI" id="CHEBI:30616"/>
    </ligand>
</feature>
<feature type="binding site" evidence="1">
    <location>
        <position position="425"/>
    </location>
    <ligand>
        <name>ATP</name>
        <dbReference type="ChEBI" id="CHEBI:30616"/>
    </ligand>
</feature>
<comment type="function">
    <text evidence="1">DNA ligase that seals nicks in double-stranded DNA during DNA replication, DNA recombination and DNA repair.</text>
</comment>
<comment type="catalytic activity">
    <reaction evidence="1">
        <text>ATP + (deoxyribonucleotide)n-3'-hydroxyl + 5'-phospho-(deoxyribonucleotide)m = (deoxyribonucleotide)n+m + AMP + diphosphate.</text>
        <dbReference type="EC" id="6.5.1.1"/>
    </reaction>
</comment>
<comment type="cofactor">
    <cofactor evidence="1">
        <name>Mg(2+)</name>
        <dbReference type="ChEBI" id="CHEBI:18420"/>
    </cofactor>
</comment>
<comment type="similarity">
    <text evidence="1">Belongs to the ATP-dependent DNA ligase family.</text>
</comment>
<gene>
    <name evidence="1" type="primary">lig</name>
    <name type="ordered locus">Maeo_0864</name>
</gene>